<organism>
    <name type="scientific">Vaccinia virus (strain Ankara)</name>
    <name type="common">VACV</name>
    <dbReference type="NCBI Taxonomy" id="126794"/>
    <lineage>
        <taxon>Viruses</taxon>
        <taxon>Varidnaviria</taxon>
        <taxon>Bamfordvirae</taxon>
        <taxon>Nucleocytoviricota</taxon>
        <taxon>Pokkesviricetes</taxon>
        <taxon>Chitovirales</taxon>
        <taxon>Poxviridae</taxon>
        <taxon>Chordopoxvirinae</taxon>
        <taxon>Orthopoxvirus</taxon>
        <taxon>Vaccinia virus</taxon>
    </lineage>
</organism>
<dbReference type="EMBL" id="U94848">
    <property type="protein sequence ID" value="AAB96445.1"/>
    <property type="molecule type" value="Genomic_DNA"/>
</dbReference>
<dbReference type="EMBL" id="AY603355">
    <property type="protein sequence ID" value="AAT10487.1"/>
    <property type="molecule type" value="Genomic_DNA"/>
</dbReference>
<dbReference type="PDB" id="8WT5">
    <property type="method" value="NMR"/>
    <property type="chains" value="A=2-68"/>
</dbReference>
<dbReference type="PDBsum" id="8WT5"/>
<dbReference type="SMR" id="Q76VD9"/>
<dbReference type="DNASU" id="3707553"/>
<dbReference type="KEGG" id="vg:3707553"/>
<dbReference type="Proteomes" id="UP000159908">
    <property type="component" value="Segment"/>
</dbReference>
<dbReference type="Proteomes" id="UP000172909">
    <property type="component" value="Segment"/>
</dbReference>
<dbReference type="GO" id="GO:0016020">
    <property type="term" value="C:membrane"/>
    <property type="evidence" value="ECO:0007669"/>
    <property type="project" value="UniProtKB-KW"/>
</dbReference>
<dbReference type="GO" id="GO:0019031">
    <property type="term" value="C:viral envelope"/>
    <property type="evidence" value="ECO:0007669"/>
    <property type="project" value="UniProtKB-KW"/>
</dbReference>
<dbReference type="GO" id="GO:0055036">
    <property type="term" value="C:virion membrane"/>
    <property type="evidence" value="ECO:0007669"/>
    <property type="project" value="UniProtKB-SubCell"/>
</dbReference>
<dbReference type="GO" id="GO:0019064">
    <property type="term" value="P:fusion of virus membrane with host plasma membrane"/>
    <property type="evidence" value="ECO:0007669"/>
    <property type="project" value="UniProtKB-KW"/>
</dbReference>
<dbReference type="GO" id="GO:0046718">
    <property type="term" value="P:symbiont entry into host cell"/>
    <property type="evidence" value="ECO:0007669"/>
    <property type="project" value="UniProtKB-KW"/>
</dbReference>
<dbReference type="InterPro" id="IPR004251">
    <property type="entry name" value="Pox_virus_G9/A16"/>
</dbReference>
<dbReference type="Pfam" id="PF03003">
    <property type="entry name" value="Pox_G9-A16"/>
    <property type="match status" value="1"/>
</dbReference>
<comment type="function">
    <text evidence="1">Envelope protein part of the entry-fusion complex responsible for the virus membrane fusion with host cell membrane during virus entry. Also plays a role in cell-cell fusion (syncytium formation) (By similarity).</text>
</comment>
<comment type="subunit">
    <text evidence="1">Part of a stable entry-fusion complex (EFC) which is at least composed of proteins A16, A21, A28, G3, G9, H2, J5, and L5. Formation of the viral membrane is necessary for the assembly of the complex (By similarity).</text>
</comment>
<comment type="subcellular location">
    <subcellularLocation>
        <location evidence="3">Virion membrane</location>
        <topology evidence="3">Single-pass membrane protein</topology>
    </subcellularLocation>
    <text evidence="1">Component of the mature virion (MV) membrane. The mature virion is located in the cytoplasm of infected cells and is probably released by cell lysis (By similarity).</text>
</comment>
<comment type="similarity">
    <text evidence="3">Belongs to the poxviridae A16/G9/J5 family.</text>
</comment>
<evidence type="ECO:0000250" key="1"/>
<evidence type="ECO:0000255" key="2"/>
<evidence type="ECO:0000305" key="3"/>
<evidence type="ECO:0007829" key="4">
    <source>
        <dbReference type="PDB" id="8WT5"/>
    </source>
</evidence>
<sequence>MTDEQIYAFCDANKDDIRCKCIYPDKSIVRIGIDTRLPYYCWYEPCKRSDALLPASLKKNITKCNVSDCTISLGNVSITDSKLDVNNVCDSKRVATENIAVRYLNQEIRYPIIDIKWLPIGLLALAILILAFF</sequence>
<reference key="1">
    <citation type="journal article" date="1998" name="Virology">
        <title>The complete genomic sequence of the modified vaccinia Ankara strain: comparison with other orthopoxviruses.</title>
        <authorList>
            <person name="Antoine G."/>
            <person name="Scheiflinger F."/>
            <person name="Dorner F."/>
            <person name="Falkner F.G."/>
        </authorList>
    </citation>
    <scope>NUCLEOTIDE SEQUENCE [LARGE SCALE GENOMIC DNA]</scope>
</reference>
<reference key="2">
    <citation type="submission" date="2004-04" db="EMBL/GenBank/DDBJ databases">
        <authorList>
            <person name="Esposito J.J."/>
            <person name="Frace M."/>
            <person name="Sammons S.A."/>
            <person name="Olsen-Rasmussen M.S."/>
            <person name="Osborne J."/>
            <person name="Khristova M."/>
            <person name="Wohlhueter R.M."/>
        </authorList>
    </citation>
    <scope>NUCLEOTIDE SEQUENCE [LARGE SCALE GENOMIC DNA]</scope>
    <source>
        <strain>Isolate Acambis 3000</strain>
    </source>
</reference>
<proteinExistence type="evidence at protein level"/>
<organismHost>
    <name type="scientific">Homo sapiens</name>
    <name type="common">Human</name>
    <dbReference type="NCBI Taxonomy" id="9606"/>
</organismHost>
<keyword id="KW-0002">3D-structure</keyword>
<keyword id="KW-1169">Fusion of virus membrane with host cell membrane</keyword>
<keyword id="KW-1168">Fusion of virus membrane with host membrane</keyword>
<keyword id="KW-0472">Membrane</keyword>
<keyword id="KW-0735">Signal-anchor</keyword>
<keyword id="KW-0812">Transmembrane</keyword>
<keyword id="KW-1133">Transmembrane helix</keyword>
<keyword id="KW-0261">Viral envelope protein</keyword>
<keyword id="KW-1162">Viral penetration into host cytoplasm</keyword>
<keyword id="KW-0946">Virion</keyword>
<keyword id="KW-1160">Virus entry into host cell</keyword>
<name>J5_VACCA</name>
<feature type="chain" id="PRO_0000099593" description="Protein J5">
    <location>
        <begin position="1"/>
        <end position="133"/>
    </location>
</feature>
<feature type="topological domain" description="Virion surface" evidence="1">
    <location>
        <begin position="1"/>
        <end position="111"/>
    </location>
</feature>
<feature type="transmembrane region" description="Helical; Signal-anchor" evidence="2">
    <location>
        <begin position="112"/>
        <end position="132"/>
    </location>
</feature>
<feature type="helix" evidence="4">
    <location>
        <begin position="3"/>
        <end position="12"/>
    </location>
</feature>
<feature type="helix" evidence="4">
    <location>
        <begin position="17"/>
        <end position="19"/>
    </location>
</feature>
<feature type="turn" evidence="4">
    <location>
        <begin position="20"/>
        <end position="22"/>
    </location>
</feature>
<feature type="helix" evidence="4">
    <location>
        <begin position="26"/>
        <end position="35"/>
    </location>
</feature>
<feature type="helix" evidence="4">
    <location>
        <begin position="39"/>
        <end position="41"/>
    </location>
</feature>
<feature type="helix" evidence="4">
    <location>
        <begin position="44"/>
        <end position="46"/>
    </location>
</feature>
<feature type="strand" evidence="4">
    <location>
        <begin position="47"/>
        <end position="50"/>
    </location>
</feature>
<feature type="helix" evidence="4">
    <location>
        <begin position="55"/>
        <end position="62"/>
    </location>
</feature>
<feature type="turn" evidence="4">
    <location>
        <begin position="63"/>
        <end position="65"/>
    </location>
</feature>
<protein>
    <recommendedName>
        <fullName>Protein J5</fullName>
    </recommendedName>
</protein>
<accession>Q76VD9</accession>
<gene>
    <name type="ordered locus">MVA089L</name>
    <name type="ordered locus">ACAM3000_MVA_089</name>
</gene>